<evidence type="ECO:0000255" key="1">
    <source>
        <dbReference type="HAMAP-Rule" id="MF_00203"/>
    </source>
</evidence>
<evidence type="ECO:0000256" key="2">
    <source>
        <dbReference type="SAM" id="MobiDB-lite"/>
    </source>
</evidence>
<feature type="chain" id="PRO_1000200597" description="UvrABC system protein C">
    <location>
        <begin position="1"/>
        <end position="743"/>
    </location>
</feature>
<feature type="domain" description="GIY-YIG" evidence="1">
    <location>
        <begin position="16"/>
        <end position="95"/>
    </location>
</feature>
<feature type="domain" description="UVR" evidence="1">
    <location>
        <begin position="208"/>
        <end position="243"/>
    </location>
</feature>
<feature type="region of interest" description="Disordered" evidence="2">
    <location>
        <begin position="497"/>
        <end position="543"/>
    </location>
</feature>
<feature type="region of interest" description="Disordered" evidence="2">
    <location>
        <begin position="694"/>
        <end position="743"/>
    </location>
</feature>
<feature type="compositionally biased region" description="Acidic residues" evidence="2">
    <location>
        <begin position="506"/>
        <end position="520"/>
    </location>
</feature>
<feature type="compositionally biased region" description="Polar residues" evidence="2">
    <location>
        <begin position="734"/>
        <end position="743"/>
    </location>
</feature>
<accession>C1B4L2</accession>
<dbReference type="EMBL" id="AP011115">
    <property type="protein sequence ID" value="BAH55201.1"/>
    <property type="molecule type" value="Genomic_DNA"/>
</dbReference>
<dbReference type="RefSeq" id="WP_015890627.1">
    <property type="nucleotide sequence ID" value="NC_012522.1"/>
</dbReference>
<dbReference type="SMR" id="C1B4L2"/>
<dbReference type="STRING" id="632772.ROP_69540"/>
<dbReference type="KEGG" id="rop:ROP_69540"/>
<dbReference type="PATRIC" id="fig|632772.20.peg.7245"/>
<dbReference type="HOGENOM" id="CLU_014841_3_2_11"/>
<dbReference type="OrthoDB" id="9804933at2"/>
<dbReference type="Proteomes" id="UP000002212">
    <property type="component" value="Chromosome"/>
</dbReference>
<dbReference type="GO" id="GO:0005737">
    <property type="term" value="C:cytoplasm"/>
    <property type="evidence" value="ECO:0007669"/>
    <property type="project" value="UniProtKB-SubCell"/>
</dbReference>
<dbReference type="GO" id="GO:0009380">
    <property type="term" value="C:excinuclease repair complex"/>
    <property type="evidence" value="ECO:0007669"/>
    <property type="project" value="InterPro"/>
</dbReference>
<dbReference type="GO" id="GO:0003677">
    <property type="term" value="F:DNA binding"/>
    <property type="evidence" value="ECO:0007669"/>
    <property type="project" value="UniProtKB-UniRule"/>
</dbReference>
<dbReference type="GO" id="GO:0009381">
    <property type="term" value="F:excinuclease ABC activity"/>
    <property type="evidence" value="ECO:0007669"/>
    <property type="project" value="UniProtKB-UniRule"/>
</dbReference>
<dbReference type="GO" id="GO:0006289">
    <property type="term" value="P:nucleotide-excision repair"/>
    <property type="evidence" value="ECO:0007669"/>
    <property type="project" value="UniProtKB-UniRule"/>
</dbReference>
<dbReference type="GO" id="GO:0009432">
    <property type="term" value="P:SOS response"/>
    <property type="evidence" value="ECO:0007669"/>
    <property type="project" value="UniProtKB-UniRule"/>
</dbReference>
<dbReference type="CDD" id="cd10434">
    <property type="entry name" value="GIY-YIG_UvrC_Cho"/>
    <property type="match status" value="1"/>
</dbReference>
<dbReference type="FunFam" id="3.40.1440.10:FF:000001">
    <property type="entry name" value="UvrABC system protein C"/>
    <property type="match status" value="1"/>
</dbReference>
<dbReference type="Gene3D" id="1.10.150.20">
    <property type="entry name" value="5' to 3' exonuclease, C-terminal subdomain"/>
    <property type="match status" value="1"/>
</dbReference>
<dbReference type="Gene3D" id="3.40.1440.10">
    <property type="entry name" value="GIY-YIG endonuclease"/>
    <property type="match status" value="1"/>
</dbReference>
<dbReference type="Gene3D" id="4.10.860.10">
    <property type="entry name" value="UVR domain"/>
    <property type="match status" value="1"/>
</dbReference>
<dbReference type="Gene3D" id="3.30.420.340">
    <property type="entry name" value="UvrC, RNAse H endonuclease domain"/>
    <property type="match status" value="1"/>
</dbReference>
<dbReference type="HAMAP" id="MF_00203">
    <property type="entry name" value="UvrC"/>
    <property type="match status" value="1"/>
</dbReference>
<dbReference type="InterPro" id="IPR000305">
    <property type="entry name" value="GIY-YIG_endonuc"/>
</dbReference>
<dbReference type="InterPro" id="IPR035901">
    <property type="entry name" value="GIY-YIG_endonuc_sf"/>
</dbReference>
<dbReference type="InterPro" id="IPR047296">
    <property type="entry name" value="GIY-YIG_UvrC_Cho"/>
</dbReference>
<dbReference type="InterPro" id="IPR003583">
    <property type="entry name" value="Hlx-hairpin-Hlx_DNA-bd_motif"/>
</dbReference>
<dbReference type="InterPro" id="IPR010994">
    <property type="entry name" value="RuvA_2-like"/>
</dbReference>
<dbReference type="InterPro" id="IPR001943">
    <property type="entry name" value="UVR_dom"/>
</dbReference>
<dbReference type="InterPro" id="IPR036876">
    <property type="entry name" value="UVR_dom_sf"/>
</dbReference>
<dbReference type="InterPro" id="IPR050066">
    <property type="entry name" value="UvrABC_protein_C"/>
</dbReference>
<dbReference type="InterPro" id="IPR004791">
    <property type="entry name" value="UvrC"/>
</dbReference>
<dbReference type="InterPro" id="IPR001162">
    <property type="entry name" value="UvrC_RNase_H_dom"/>
</dbReference>
<dbReference type="InterPro" id="IPR038476">
    <property type="entry name" value="UvrC_RNase_H_dom_sf"/>
</dbReference>
<dbReference type="NCBIfam" id="NF001824">
    <property type="entry name" value="PRK00558.1-5"/>
    <property type="match status" value="1"/>
</dbReference>
<dbReference type="NCBIfam" id="TIGR00194">
    <property type="entry name" value="uvrC"/>
    <property type="match status" value="1"/>
</dbReference>
<dbReference type="PANTHER" id="PTHR30562:SF1">
    <property type="entry name" value="UVRABC SYSTEM PROTEIN C"/>
    <property type="match status" value="1"/>
</dbReference>
<dbReference type="PANTHER" id="PTHR30562">
    <property type="entry name" value="UVRC/OXIDOREDUCTASE"/>
    <property type="match status" value="1"/>
</dbReference>
<dbReference type="Pfam" id="PF01541">
    <property type="entry name" value="GIY-YIG"/>
    <property type="match status" value="1"/>
</dbReference>
<dbReference type="Pfam" id="PF14520">
    <property type="entry name" value="HHH_5"/>
    <property type="match status" value="1"/>
</dbReference>
<dbReference type="Pfam" id="PF02151">
    <property type="entry name" value="UVR"/>
    <property type="match status" value="1"/>
</dbReference>
<dbReference type="Pfam" id="PF22920">
    <property type="entry name" value="UvrC_RNaseH"/>
    <property type="match status" value="1"/>
</dbReference>
<dbReference type="Pfam" id="PF08459">
    <property type="entry name" value="UvrC_RNaseH_dom"/>
    <property type="match status" value="1"/>
</dbReference>
<dbReference type="SMART" id="SM00465">
    <property type="entry name" value="GIYc"/>
    <property type="match status" value="1"/>
</dbReference>
<dbReference type="SMART" id="SM00278">
    <property type="entry name" value="HhH1"/>
    <property type="match status" value="2"/>
</dbReference>
<dbReference type="SUPFAM" id="SSF46600">
    <property type="entry name" value="C-terminal UvrC-binding domain of UvrB"/>
    <property type="match status" value="1"/>
</dbReference>
<dbReference type="SUPFAM" id="SSF82771">
    <property type="entry name" value="GIY-YIG endonuclease"/>
    <property type="match status" value="1"/>
</dbReference>
<dbReference type="SUPFAM" id="SSF47781">
    <property type="entry name" value="RuvA domain 2-like"/>
    <property type="match status" value="1"/>
</dbReference>
<dbReference type="PROSITE" id="PS50164">
    <property type="entry name" value="GIY_YIG"/>
    <property type="match status" value="1"/>
</dbReference>
<dbReference type="PROSITE" id="PS50151">
    <property type="entry name" value="UVR"/>
    <property type="match status" value="1"/>
</dbReference>
<dbReference type="PROSITE" id="PS50165">
    <property type="entry name" value="UVRC"/>
    <property type="match status" value="1"/>
</dbReference>
<organism>
    <name type="scientific">Rhodococcus opacus (strain B4)</name>
    <dbReference type="NCBI Taxonomy" id="632772"/>
    <lineage>
        <taxon>Bacteria</taxon>
        <taxon>Bacillati</taxon>
        <taxon>Actinomycetota</taxon>
        <taxon>Actinomycetes</taxon>
        <taxon>Mycobacteriales</taxon>
        <taxon>Nocardiaceae</taxon>
        <taxon>Rhodococcus</taxon>
    </lineage>
</organism>
<gene>
    <name evidence="1" type="primary">uvrC</name>
    <name type="ordered locus">ROP_69540</name>
</gene>
<reference key="1">
    <citation type="submission" date="2009-03" db="EMBL/GenBank/DDBJ databases">
        <title>Comparison of the complete genome sequences of Rhodococcus erythropolis PR4 and Rhodococcus opacus B4.</title>
        <authorList>
            <person name="Takarada H."/>
            <person name="Sekine M."/>
            <person name="Hosoyama A."/>
            <person name="Yamada R."/>
            <person name="Fujisawa T."/>
            <person name="Omata S."/>
            <person name="Shimizu A."/>
            <person name="Tsukatani N."/>
            <person name="Tanikawa S."/>
            <person name="Fujita N."/>
            <person name="Harayama S."/>
        </authorList>
    </citation>
    <scope>NUCLEOTIDE SEQUENCE [LARGE SCALE GENOMIC DNA]</scope>
    <source>
        <strain>B4</strain>
    </source>
</reference>
<proteinExistence type="inferred from homology"/>
<sequence>MPDPSTYRPATGTIPVDPGVYKFRDPHGRVIYVGKAKSLRSRLNSYFADVSTLHPRTRQMVTTAGSVEWTVVSTEVEALQLEYNWIKEFDPRFNVRYRDDKTYPVLAVTLNEEYPRLFVYRGPRRKGVRYFGPYSHAWAIRETLDLLLRVFPARTCSAGVFKRHNQIGRPCLLGYIDKCSAPCVGRVSAAEHRKIVEDFCDFLSGRTDKLVRQLEARMQQASEELDFETAARLRDDVGALRRALEKQAVVLGDGTDADVAAFATDELEAAVQVFHVRGGRVRGQRGWVVEKAGDVIDWAAVDSAAGSDLPLLVEQFLTQFYGEQAALSGAADQEAGSSGVPREVLVPVLPPDAEQVQEWLSGLRGSAVRLRVPQRGDKKALAETVQRNAMEALQQHKLRRAGDFTSRSAALQGIQEALDLDSAPLRIECVDISHVQGTDVVASLVVFEDGLPRKSDYRHYAIKEAAGDGRSDDVASIAEVTRRRFLRHNRDVGVLRAEAAGADGDQASDTDGDQVSDTDGDQVSGGDGGDLAPEAAIDPQTGRPRRFAYPPNLYVVDGGAPQVAAASAVLDELGITDVAVIGLAKRLEEVWVPGEEDPVILPRTSESLYLLQRVRDEAHRFAITFHRSKRSRRMTASALDSVRGLGETRRKALVTHFGSVAKLKQASVEEITAVPGIGTATAKAVLTALGAEEPSADVAGVGDDEPDRTGPVTAERNGADLPREPVGQHGPAAQSASQRTGVE</sequence>
<name>UVRC_RHOOB</name>
<protein>
    <recommendedName>
        <fullName evidence="1">UvrABC system protein C</fullName>
        <shortName evidence="1">Protein UvrC</shortName>
    </recommendedName>
    <alternativeName>
        <fullName evidence="1">Excinuclease ABC subunit C</fullName>
    </alternativeName>
</protein>
<comment type="function">
    <text evidence="1">The UvrABC repair system catalyzes the recognition and processing of DNA lesions. UvrC both incises the 5' and 3' sides of the lesion. The N-terminal half is responsible for the 3' incision and the C-terminal half is responsible for the 5' incision.</text>
</comment>
<comment type="subunit">
    <text evidence="1">Interacts with UvrB in an incision complex.</text>
</comment>
<comment type="subcellular location">
    <subcellularLocation>
        <location evidence="1">Cytoplasm</location>
    </subcellularLocation>
</comment>
<comment type="similarity">
    <text evidence="1">Belongs to the UvrC family.</text>
</comment>
<keyword id="KW-0963">Cytoplasm</keyword>
<keyword id="KW-0227">DNA damage</keyword>
<keyword id="KW-0228">DNA excision</keyword>
<keyword id="KW-0234">DNA repair</keyword>
<keyword id="KW-0267">Excision nuclease</keyword>
<keyword id="KW-0742">SOS response</keyword>